<protein>
    <recommendedName>
        <fullName evidence="1">Fructose-1,6-bisphosphatase class 1 3</fullName>
        <shortName evidence="1">FBPase class 1 3</shortName>
        <ecNumber evidence="1">3.1.3.11</ecNumber>
    </recommendedName>
    <alternativeName>
        <fullName evidence="1">D-fructose-1,6-bisphosphate 1-phosphohydrolase class 1 3</fullName>
    </alternativeName>
</protein>
<feature type="chain" id="PRO_0000364497" description="Fructose-1,6-bisphosphatase class 1 3">
    <location>
        <begin position="1"/>
        <end position="367"/>
    </location>
</feature>
<geneLocation type="plasmid">
    <name>pBPHY01</name>
</geneLocation>
<dbReference type="EC" id="3.1.3.11" evidence="1"/>
<dbReference type="EMBL" id="CP001045">
    <property type="protein sequence ID" value="ACC75524.1"/>
    <property type="molecule type" value="Genomic_DNA"/>
</dbReference>
<dbReference type="RefSeq" id="WP_012405683.1">
    <property type="nucleotide sequence ID" value="NC_010625.1"/>
</dbReference>
<dbReference type="SMR" id="B2JX47"/>
<dbReference type="KEGG" id="bph:Bphy_6494"/>
<dbReference type="HOGENOM" id="CLU_039977_0_0_4"/>
<dbReference type="OrthoDB" id="9806756at2"/>
<dbReference type="UniPathway" id="UPA00138"/>
<dbReference type="Proteomes" id="UP000001192">
    <property type="component" value="Plasmid pBPHY01"/>
</dbReference>
<dbReference type="GO" id="GO:0005829">
    <property type="term" value="C:cytosol"/>
    <property type="evidence" value="ECO:0007669"/>
    <property type="project" value="TreeGrafter"/>
</dbReference>
<dbReference type="GO" id="GO:0042132">
    <property type="term" value="F:fructose 1,6-bisphosphate 1-phosphatase activity"/>
    <property type="evidence" value="ECO:0007669"/>
    <property type="project" value="UniProtKB-UniRule"/>
</dbReference>
<dbReference type="GO" id="GO:0030388">
    <property type="term" value="P:fructose 1,6-bisphosphate metabolic process"/>
    <property type="evidence" value="ECO:0007669"/>
    <property type="project" value="TreeGrafter"/>
</dbReference>
<dbReference type="GO" id="GO:0006002">
    <property type="term" value="P:fructose 6-phosphate metabolic process"/>
    <property type="evidence" value="ECO:0007669"/>
    <property type="project" value="TreeGrafter"/>
</dbReference>
<dbReference type="GO" id="GO:0006000">
    <property type="term" value="P:fructose metabolic process"/>
    <property type="evidence" value="ECO:0007669"/>
    <property type="project" value="TreeGrafter"/>
</dbReference>
<dbReference type="GO" id="GO:0006094">
    <property type="term" value="P:gluconeogenesis"/>
    <property type="evidence" value="ECO:0007669"/>
    <property type="project" value="UniProtKB-UniRule"/>
</dbReference>
<dbReference type="GO" id="GO:0005986">
    <property type="term" value="P:sucrose biosynthetic process"/>
    <property type="evidence" value="ECO:0007669"/>
    <property type="project" value="TreeGrafter"/>
</dbReference>
<dbReference type="CDD" id="cd00354">
    <property type="entry name" value="FBPase"/>
    <property type="match status" value="1"/>
</dbReference>
<dbReference type="Gene3D" id="3.40.190.80">
    <property type="match status" value="1"/>
</dbReference>
<dbReference type="Gene3D" id="3.30.540.10">
    <property type="entry name" value="Fructose-1,6-Bisphosphatase, subunit A, domain 1"/>
    <property type="match status" value="1"/>
</dbReference>
<dbReference type="HAMAP" id="MF_01855">
    <property type="entry name" value="FBPase_class1"/>
    <property type="match status" value="1"/>
</dbReference>
<dbReference type="InterPro" id="IPR044015">
    <property type="entry name" value="FBPase_C_dom"/>
</dbReference>
<dbReference type="InterPro" id="IPR000146">
    <property type="entry name" value="FBPase_class-1"/>
</dbReference>
<dbReference type="InterPro" id="IPR033391">
    <property type="entry name" value="FBPase_N"/>
</dbReference>
<dbReference type="InterPro" id="IPR028343">
    <property type="entry name" value="FBPtase"/>
</dbReference>
<dbReference type="PANTHER" id="PTHR11556">
    <property type="entry name" value="FRUCTOSE-1,6-BISPHOSPHATASE-RELATED"/>
    <property type="match status" value="1"/>
</dbReference>
<dbReference type="PANTHER" id="PTHR11556:SF35">
    <property type="entry name" value="SEDOHEPTULOSE-1,7-BISPHOSPHATASE, CHLOROPLASTIC"/>
    <property type="match status" value="1"/>
</dbReference>
<dbReference type="Pfam" id="PF00316">
    <property type="entry name" value="FBPase"/>
    <property type="match status" value="1"/>
</dbReference>
<dbReference type="Pfam" id="PF18913">
    <property type="entry name" value="FBPase_C"/>
    <property type="match status" value="1"/>
</dbReference>
<dbReference type="PIRSF" id="PIRSF000904">
    <property type="entry name" value="FBPtase_SBPase"/>
    <property type="match status" value="1"/>
</dbReference>
<dbReference type="PRINTS" id="PR00115">
    <property type="entry name" value="F16BPHPHTASE"/>
</dbReference>
<dbReference type="SUPFAM" id="SSF56655">
    <property type="entry name" value="Carbohydrate phosphatase"/>
    <property type="match status" value="1"/>
</dbReference>
<name>F16A3_PARP8</name>
<organism>
    <name type="scientific">Paraburkholderia phymatum (strain DSM 17167 / CIP 108236 / LMG 21445 / STM815)</name>
    <name type="common">Burkholderia phymatum</name>
    <dbReference type="NCBI Taxonomy" id="391038"/>
    <lineage>
        <taxon>Bacteria</taxon>
        <taxon>Pseudomonadati</taxon>
        <taxon>Pseudomonadota</taxon>
        <taxon>Betaproteobacteria</taxon>
        <taxon>Burkholderiales</taxon>
        <taxon>Burkholderiaceae</taxon>
        <taxon>Paraburkholderia</taxon>
    </lineage>
</organism>
<evidence type="ECO:0000255" key="1">
    <source>
        <dbReference type="HAMAP-Rule" id="MF_01855"/>
    </source>
</evidence>
<reference key="1">
    <citation type="journal article" date="2014" name="Stand. Genomic Sci.">
        <title>Complete genome sequence of Burkholderia phymatum STM815(T), a broad host range and efficient nitrogen-fixing symbiont of Mimosa species.</title>
        <authorList>
            <person name="Moulin L."/>
            <person name="Klonowska A."/>
            <person name="Caroline B."/>
            <person name="Booth K."/>
            <person name="Vriezen J.A."/>
            <person name="Melkonian R."/>
            <person name="James E.K."/>
            <person name="Young J.P."/>
            <person name="Bena G."/>
            <person name="Hauser L."/>
            <person name="Land M."/>
            <person name="Kyrpides N."/>
            <person name="Bruce D."/>
            <person name="Chain P."/>
            <person name="Copeland A."/>
            <person name="Pitluck S."/>
            <person name="Woyke T."/>
            <person name="Lizotte-Waniewski M."/>
            <person name="Bristow J."/>
            <person name="Riley M."/>
        </authorList>
    </citation>
    <scope>NUCLEOTIDE SEQUENCE [LARGE SCALE GENOMIC DNA]</scope>
    <source>
        <strain>DSM 17167 / CIP 108236 / LMG 21445 / STM815</strain>
    </source>
</reference>
<accession>B2JX47</accession>
<proteinExistence type="inferred from homology"/>
<sequence length="367" mass="39997">MRHANVTLTRFLAGDADHLMTTRPPTALQAVLHEVAASVKTIASALARGTLGDSAHADSVAGGAVLAYATRRRKLAETAARNRGADDAGKPEYQLAFDPLNCPWNADINGTAGSIFSVMRVQSQGSDADGAADTCAQAYGELDCEPYDEPYGAPFLQPGREQAAAGYTIYGPATMLIVTLGEGTHGFTLDGQTDEFMLTHPSIRIPAETGEIAVDASNERFWEPPVRRYVHECRDGRAGCRERDFSLRWSDALVAEVHRILMRGGLFLMPRDYRTRSAMRGRLSAVYDASPLGFLVEQAGGMATTGRERVLDAAPRTFHERMPLILGSASEVTRIGRYHREHDLGIDAPFTSPLFRERSLFLPETSL</sequence>
<keyword id="KW-0119">Carbohydrate metabolism</keyword>
<keyword id="KW-0963">Cytoplasm</keyword>
<keyword id="KW-0378">Hydrolase</keyword>
<keyword id="KW-0614">Plasmid</keyword>
<keyword id="KW-1185">Reference proteome</keyword>
<comment type="catalytic activity">
    <reaction evidence="1">
        <text>beta-D-fructose 1,6-bisphosphate + H2O = beta-D-fructose 6-phosphate + phosphate</text>
        <dbReference type="Rhea" id="RHEA:11064"/>
        <dbReference type="ChEBI" id="CHEBI:15377"/>
        <dbReference type="ChEBI" id="CHEBI:32966"/>
        <dbReference type="ChEBI" id="CHEBI:43474"/>
        <dbReference type="ChEBI" id="CHEBI:57634"/>
        <dbReference type="EC" id="3.1.3.11"/>
    </reaction>
</comment>
<comment type="pathway">
    <text evidence="1">Carbohydrate biosynthesis; gluconeogenesis.</text>
</comment>
<comment type="subunit">
    <text evidence="1">Homotetramer.</text>
</comment>
<comment type="subcellular location">
    <subcellularLocation>
        <location evidence="1">Cytoplasm</location>
    </subcellularLocation>
</comment>
<comment type="similarity">
    <text evidence="1">Belongs to the FBPase class 1 family.</text>
</comment>
<gene>
    <name evidence="1" type="primary">fbp3</name>
    <name type="ordered locus">Bphy_6494</name>
</gene>